<accession>Q8REH1</accession>
<evidence type="ECO:0000255" key="1">
    <source>
        <dbReference type="HAMAP-Rule" id="MF_00244"/>
    </source>
</evidence>
<proteinExistence type="inferred from homology"/>
<sequence length="193" mass="22779">MKIAIYGGSFNPMHIGHEKIVDYVLKNLDMDKIIIIPVGIPSHRENNLEQSDTRLKICKEIFKNNKKVEVSDIEIKAEGKSYTYDTLLKLIEIYGKDNEFFEIIGEDSLKNLKTWRNYKELLNLCKFIVFRRKDDKNIEIDNEFLNNKNIIILENEYYNISSTEIRNKVKNKEDISGLVNKKVKKLIEKEYID</sequence>
<feature type="chain" id="PRO_0000181412" description="Probable nicotinate-nucleotide adenylyltransferase">
    <location>
        <begin position="1"/>
        <end position="193"/>
    </location>
</feature>
<reference key="1">
    <citation type="journal article" date="2002" name="J. Bacteriol.">
        <title>Genome sequence and analysis of the oral bacterium Fusobacterium nucleatum strain ATCC 25586.</title>
        <authorList>
            <person name="Kapatral V."/>
            <person name="Anderson I."/>
            <person name="Ivanova N."/>
            <person name="Reznik G."/>
            <person name="Los T."/>
            <person name="Lykidis A."/>
            <person name="Bhattacharyya A."/>
            <person name="Bartman A."/>
            <person name="Gardner W."/>
            <person name="Grechkin G."/>
            <person name="Zhu L."/>
            <person name="Vasieva O."/>
            <person name="Chu L."/>
            <person name="Kogan Y."/>
            <person name="Chaga O."/>
            <person name="Goltsman E."/>
            <person name="Bernal A."/>
            <person name="Larsen N."/>
            <person name="D'Souza M."/>
            <person name="Walunas T."/>
            <person name="Pusch G."/>
            <person name="Haselkorn R."/>
            <person name="Fonstein M."/>
            <person name="Kyrpides N.C."/>
            <person name="Overbeek R."/>
        </authorList>
    </citation>
    <scope>NUCLEOTIDE SEQUENCE [LARGE SCALE GENOMIC DNA]</scope>
    <source>
        <strain>ATCC 25586 / DSM 15643 / BCRC 10681 / CIP 101130 / JCM 8532 / KCTC 2640 / LMG 13131 / VPI 4355</strain>
    </source>
</reference>
<dbReference type="EC" id="2.7.7.18" evidence="1"/>
<dbReference type="EMBL" id="AE009951">
    <property type="protein sequence ID" value="AAL95328.1"/>
    <property type="molecule type" value="Genomic_DNA"/>
</dbReference>
<dbReference type="RefSeq" id="NP_604029.1">
    <property type="nucleotide sequence ID" value="NC_003454.1"/>
</dbReference>
<dbReference type="RefSeq" id="WP_011016925.1">
    <property type="nucleotide sequence ID" value="NZ_CP028101.1"/>
</dbReference>
<dbReference type="SMR" id="Q8REH1"/>
<dbReference type="FunCoup" id="Q8REH1">
    <property type="interactions" value="339"/>
</dbReference>
<dbReference type="STRING" id="190304.FN1132"/>
<dbReference type="PaxDb" id="190304-FN1132"/>
<dbReference type="EnsemblBacteria" id="AAL95328">
    <property type="protein sequence ID" value="AAL95328"/>
    <property type="gene ID" value="FN1132"/>
</dbReference>
<dbReference type="GeneID" id="79784112"/>
<dbReference type="KEGG" id="fnu:FN1132"/>
<dbReference type="PATRIC" id="fig|190304.8.peg.1697"/>
<dbReference type="eggNOG" id="COG1057">
    <property type="taxonomic scope" value="Bacteria"/>
</dbReference>
<dbReference type="HOGENOM" id="CLU_069765_3_1_0"/>
<dbReference type="InParanoid" id="Q8REH1"/>
<dbReference type="BioCyc" id="FNUC190304:G1FZS-1712-MONOMER"/>
<dbReference type="UniPathway" id="UPA00253">
    <property type="reaction ID" value="UER00332"/>
</dbReference>
<dbReference type="Proteomes" id="UP000002521">
    <property type="component" value="Chromosome"/>
</dbReference>
<dbReference type="GO" id="GO:0005524">
    <property type="term" value="F:ATP binding"/>
    <property type="evidence" value="ECO:0007669"/>
    <property type="project" value="UniProtKB-KW"/>
</dbReference>
<dbReference type="GO" id="GO:0004515">
    <property type="term" value="F:nicotinate-nucleotide adenylyltransferase activity"/>
    <property type="evidence" value="ECO:0007669"/>
    <property type="project" value="UniProtKB-UniRule"/>
</dbReference>
<dbReference type="GO" id="GO:0009435">
    <property type="term" value="P:NAD biosynthetic process"/>
    <property type="evidence" value="ECO:0007669"/>
    <property type="project" value="UniProtKB-UniRule"/>
</dbReference>
<dbReference type="CDD" id="cd02165">
    <property type="entry name" value="NMNAT"/>
    <property type="match status" value="1"/>
</dbReference>
<dbReference type="Gene3D" id="3.40.50.620">
    <property type="entry name" value="HUPs"/>
    <property type="match status" value="1"/>
</dbReference>
<dbReference type="HAMAP" id="MF_00244">
    <property type="entry name" value="NaMN_adenylyltr"/>
    <property type="match status" value="1"/>
</dbReference>
<dbReference type="InterPro" id="IPR004821">
    <property type="entry name" value="Cyt_trans-like"/>
</dbReference>
<dbReference type="InterPro" id="IPR005248">
    <property type="entry name" value="NadD/NMNAT"/>
</dbReference>
<dbReference type="InterPro" id="IPR014729">
    <property type="entry name" value="Rossmann-like_a/b/a_fold"/>
</dbReference>
<dbReference type="NCBIfam" id="TIGR00482">
    <property type="entry name" value="nicotinate (nicotinamide) nucleotide adenylyltransferase"/>
    <property type="match status" value="1"/>
</dbReference>
<dbReference type="NCBIfam" id="NF000840">
    <property type="entry name" value="PRK00071.1-3"/>
    <property type="match status" value="1"/>
</dbReference>
<dbReference type="PANTHER" id="PTHR39321">
    <property type="entry name" value="NICOTINATE-NUCLEOTIDE ADENYLYLTRANSFERASE-RELATED"/>
    <property type="match status" value="1"/>
</dbReference>
<dbReference type="PANTHER" id="PTHR39321:SF3">
    <property type="entry name" value="PHOSPHOPANTETHEINE ADENYLYLTRANSFERASE"/>
    <property type="match status" value="1"/>
</dbReference>
<dbReference type="Pfam" id="PF01467">
    <property type="entry name" value="CTP_transf_like"/>
    <property type="match status" value="1"/>
</dbReference>
<dbReference type="SUPFAM" id="SSF52374">
    <property type="entry name" value="Nucleotidylyl transferase"/>
    <property type="match status" value="1"/>
</dbReference>
<name>NADD_FUSNN</name>
<comment type="function">
    <text evidence="1">Catalyzes the reversible adenylation of nicotinate mononucleotide (NaMN) to nicotinic acid adenine dinucleotide (NaAD).</text>
</comment>
<comment type="catalytic activity">
    <reaction evidence="1">
        <text>nicotinate beta-D-ribonucleotide + ATP + H(+) = deamido-NAD(+) + diphosphate</text>
        <dbReference type="Rhea" id="RHEA:22860"/>
        <dbReference type="ChEBI" id="CHEBI:15378"/>
        <dbReference type="ChEBI" id="CHEBI:30616"/>
        <dbReference type="ChEBI" id="CHEBI:33019"/>
        <dbReference type="ChEBI" id="CHEBI:57502"/>
        <dbReference type="ChEBI" id="CHEBI:58437"/>
        <dbReference type="EC" id="2.7.7.18"/>
    </reaction>
</comment>
<comment type="pathway">
    <text evidence="1">Cofactor biosynthesis; NAD(+) biosynthesis; deamido-NAD(+) from nicotinate D-ribonucleotide: step 1/1.</text>
</comment>
<comment type="similarity">
    <text evidence="1">Belongs to the NadD family.</text>
</comment>
<gene>
    <name evidence="1" type="primary">nadD</name>
    <name type="ordered locus">FN1132</name>
</gene>
<keyword id="KW-0067">ATP-binding</keyword>
<keyword id="KW-0520">NAD</keyword>
<keyword id="KW-0547">Nucleotide-binding</keyword>
<keyword id="KW-0548">Nucleotidyltransferase</keyword>
<keyword id="KW-0662">Pyridine nucleotide biosynthesis</keyword>
<keyword id="KW-1185">Reference proteome</keyword>
<keyword id="KW-0808">Transferase</keyword>
<organism>
    <name type="scientific">Fusobacterium nucleatum subsp. nucleatum (strain ATCC 25586 / DSM 15643 / BCRC 10681 / CIP 101130 / JCM 8532 / KCTC 2640 / LMG 13131 / VPI 4355)</name>
    <dbReference type="NCBI Taxonomy" id="190304"/>
    <lineage>
        <taxon>Bacteria</taxon>
        <taxon>Fusobacteriati</taxon>
        <taxon>Fusobacteriota</taxon>
        <taxon>Fusobacteriia</taxon>
        <taxon>Fusobacteriales</taxon>
        <taxon>Fusobacteriaceae</taxon>
        <taxon>Fusobacterium</taxon>
    </lineage>
</organism>
<protein>
    <recommendedName>
        <fullName evidence="1">Probable nicotinate-nucleotide adenylyltransferase</fullName>
        <ecNumber evidence="1">2.7.7.18</ecNumber>
    </recommendedName>
    <alternativeName>
        <fullName evidence="1">Deamido-NAD(+) diphosphorylase</fullName>
    </alternativeName>
    <alternativeName>
        <fullName evidence="1">Deamido-NAD(+) pyrophosphorylase</fullName>
    </alternativeName>
    <alternativeName>
        <fullName evidence="1">Nicotinate mononucleotide adenylyltransferase</fullName>
        <shortName evidence="1">NaMN adenylyltransferase</shortName>
    </alternativeName>
</protein>